<feature type="chain" id="PRO_0000363972" description="Ataxin-2 homolog">
    <location>
        <begin position="1"/>
        <end position="1103"/>
    </location>
</feature>
<feature type="domain" description="Sm" evidence="2">
    <location>
        <begin position="84"/>
        <end position="166"/>
    </location>
</feature>
<feature type="region of interest" description="Disordered" evidence="3">
    <location>
        <begin position="1"/>
        <end position="75"/>
    </location>
</feature>
<feature type="region of interest" description="Disordered" evidence="3">
    <location>
        <begin position="305"/>
        <end position="474"/>
    </location>
</feature>
<feature type="region of interest" description="Disordered" evidence="3">
    <location>
        <begin position="516"/>
        <end position="557"/>
    </location>
</feature>
<feature type="region of interest" description="Disordered" evidence="3">
    <location>
        <begin position="615"/>
        <end position="763"/>
    </location>
</feature>
<feature type="region of interest" description="Disordered" evidence="3">
    <location>
        <begin position="901"/>
        <end position="920"/>
    </location>
</feature>
<feature type="region of interest" description="Disordered" evidence="3">
    <location>
        <begin position="930"/>
        <end position="1103"/>
    </location>
</feature>
<feature type="coiled-coil region" evidence="1">
    <location>
        <begin position="258"/>
        <end position="287"/>
    </location>
</feature>
<feature type="coiled-coil region" evidence="1">
    <location>
        <begin position="366"/>
        <end position="403"/>
    </location>
</feature>
<feature type="coiled-coil region" evidence="1">
    <location>
        <begin position="691"/>
        <end position="730"/>
    </location>
</feature>
<feature type="compositionally biased region" description="Basic residues" evidence="3">
    <location>
        <begin position="1"/>
        <end position="10"/>
    </location>
</feature>
<feature type="compositionally biased region" description="Gly residues" evidence="3">
    <location>
        <begin position="11"/>
        <end position="28"/>
    </location>
</feature>
<feature type="compositionally biased region" description="Low complexity" evidence="3">
    <location>
        <begin position="33"/>
        <end position="44"/>
    </location>
</feature>
<feature type="compositionally biased region" description="Low complexity" evidence="3">
    <location>
        <begin position="56"/>
        <end position="73"/>
    </location>
</feature>
<feature type="compositionally biased region" description="Low complexity" evidence="3">
    <location>
        <begin position="312"/>
        <end position="356"/>
    </location>
</feature>
<feature type="compositionally biased region" description="Basic and acidic residues" evidence="3">
    <location>
        <begin position="358"/>
        <end position="371"/>
    </location>
</feature>
<feature type="compositionally biased region" description="Low complexity" evidence="3">
    <location>
        <begin position="372"/>
        <end position="463"/>
    </location>
</feature>
<feature type="compositionally biased region" description="Polar residues" evidence="3">
    <location>
        <begin position="516"/>
        <end position="529"/>
    </location>
</feature>
<feature type="compositionally biased region" description="Low complexity" evidence="3">
    <location>
        <begin position="530"/>
        <end position="544"/>
    </location>
</feature>
<feature type="compositionally biased region" description="Low complexity" evidence="3">
    <location>
        <begin position="637"/>
        <end position="676"/>
    </location>
</feature>
<feature type="compositionally biased region" description="Low complexity" evidence="3">
    <location>
        <begin position="683"/>
        <end position="694"/>
    </location>
</feature>
<feature type="compositionally biased region" description="Basic and acidic residues" evidence="3">
    <location>
        <begin position="695"/>
        <end position="741"/>
    </location>
</feature>
<feature type="compositionally biased region" description="Low complexity" evidence="3">
    <location>
        <begin position="742"/>
        <end position="763"/>
    </location>
</feature>
<feature type="compositionally biased region" description="Low complexity" evidence="3">
    <location>
        <begin position="930"/>
        <end position="957"/>
    </location>
</feature>
<feature type="compositionally biased region" description="Gly residues" evidence="3">
    <location>
        <begin position="960"/>
        <end position="969"/>
    </location>
</feature>
<feature type="compositionally biased region" description="Low complexity" evidence="3">
    <location>
        <begin position="974"/>
        <end position="984"/>
    </location>
</feature>
<feature type="compositionally biased region" description="Pro residues" evidence="3">
    <location>
        <begin position="1020"/>
        <end position="1031"/>
    </location>
</feature>
<feature type="compositionally biased region" description="Low complexity" evidence="3">
    <location>
        <begin position="1062"/>
        <end position="1076"/>
    </location>
</feature>
<gene>
    <name type="primary">atxn2</name>
    <name type="ORF">DDB_G0269682</name>
</gene>
<name>ATX2_DICDI</name>
<organism>
    <name type="scientific">Dictyostelium discoideum</name>
    <name type="common">Social amoeba</name>
    <dbReference type="NCBI Taxonomy" id="44689"/>
    <lineage>
        <taxon>Eukaryota</taxon>
        <taxon>Amoebozoa</taxon>
        <taxon>Evosea</taxon>
        <taxon>Eumycetozoa</taxon>
        <taxon>Dictyostelia</taxon>
        <taxon>Dictyosteliales</taxon>
        <taxon>Dictyosteliaceae</taxon>
        <taxon>Dictyostelium</taxon>
    </lineage>
</organism>
<dbReference type="EMBL" id="AAFI02000005">
    <property type="protein sequence ID" value="EAL72191.1"/>
    <property type="molecule type" value="Genomic_DNA"/>
</dbReference>
<dbReference type="RefSeq" id="XP_646184.1">
    <property type="nucleotide sequence ID" value="XM_641092.1"/>
</dbReference>
<dbReference type="STRING" id="44689.Q55DE7"/>
<dbReference type="GlyGen" id="Q55DE7">
    <property type="glycosylation" value="5 sites"/>
</dbReference>
<dbReference type="PaxDb" id="44689-DDB0237977"/>
<dbReference type="EnsemblProtists" id="EAL72191">
    <property type="protein sequence ID" value="EAL72191"/>
    <property type="gene ID" value="DDB_G0269682"/>
</dbReference>
<dbReference type="GeneID" id="8617136"/>
<dbReference type="KEGG" id="ddi:DDB_G0269682"/>
<dbReference type="dictyBase" id="DDB_G0269682">
    <property type="gene designation" value="atxn2"/>
</dbReference>
<dbReference type="VEuPathDB" id="AmoebaDB:DDB_G0269682"/>
<dbReference type="eggNOG" id="KOG2375">
    <property type="taxonomic scope" value="Eukaryota"/>
</dbReference>
<dbReference type="HOGENOM" id="CLU_282930_0_0_1"/>
<dbReference type="InParanoid" id="Q55DE7"/>
<dbReference type="OMA" id="XISPIVS"/>
<dbReference type="PRO" id="PR:Q55DE7"/>
<dbReference type="Proteomes" id="UP000002195">
    <property type="component" value="Chromosome 1"/>
</dbReference>
<dbReference type="GO" id="GO:0010494">
    <property type="term" value="C:cytoplasmic stress granule"/>
    <property type="evidence" value="ECO:0000318"/>
    <property type="project" value="GO_Central"/>
</dbReference>
<dbReference type="GO" id="GO:0003729">
    <property type="term" value="F:mRNA binding"/>
    <property type="evidence" value="ECO:0000318"/>
    <property type="project" value="GO_Central"/>
</dbReference>
<dbReference type="GO" id="GO:0034063">
    <property type="term" value="P:stress granule assembly"/>
    <property type="evidence" value="ECO:0000318"/>
    <property type="project" value="GO_Central"/>
</dbReference>
<dbReference type="InterPro" id="IPR045117">
    <property type="entry name" value="ATXN2-like"/>
</dbReference>
<dbReference type="InterPro" id="IPR009604">
    <property type="entry name" value="LsmAD_domain"/>
</dbReference>
<dbReference type="InterPro" id="IPR009818">
    <property type="entry name" value="PAM2_motif"/>
</dbReference>
<dbReference type="InterPro" id="IPR047575">
    <property type="entry name" value="Sm"/>
</dbReference>
<dbReference type="InterPro" id="IPR025852">
    <property type="entry name" value="SM_dom_ATX"/>
</dbReference>
<dbReference type="PANTHER" id="PTHR12854">
    <property type="entry name" value="ATAXIN 2-RELATED"/>
    <property type="match status" value="1"/>
</dbReference>
<dbReference type="PANTHER" id="PTHR12854:SF7">
    <property type="entry name" value="ATAXIN-2 HOMOLOG"/>
    <property type="match status" value="1"/>
</dbReference>
<dbReference type="Pfam" id="PF06741">
    <property type="entry name" value="LsmAD"/>
    <property type="match status" value="1"/>
</dbReference>
<dbReference type="Pfam" id="PF07145">
    <property type="entry name" value="PAM2"/>
    <property type="match status" value="1"/>
</dbReference>
<dbReference type="Pfam" id="PF14438">
    <property type="entry name" value="SM-ATX"/>
    <property type="match status" value="1"/>
</dbReference>
<dbReference type="SMART" id="SM01272">
    <property type="entry name" value="LsmAD"/>
    <property type="match status" value="1"/>
</dbReference>
<dbReference type="PROSITE" id="PS52002">
    <property type="entry name" value="SM"/>
    <property type="match status" value="1"/>
</dbReference>
<proteinExistence type="inferred from homology"/>
<keyword id="KW-0175">Coiled coil</keyword>
<keyword id="KW-1185">Reference proteome</keyword>
<protein>
    <recommendedName>
        <fullName>Ataxin-2 homolog</fullName>
    </recommendedName>
</protein>
<comment type="similarity">
    <text evidence="4">Belongs to the ataxin-2 family.</text>
</comment>
<accession>Q55DE7</accession>
<evidence type="ECO:0000255" key="1"/>
<evidence type="ECO:0000255" key="2">
    <source>
        <dbReference type="PROSITE-ProRule" id="PRU01346"/>
    </source>
</evidence>
<evidence type="ECO:0000256" key="3">
    <source>
        <dbReference type="SAM" id="MobiDB-lite"/>
    </source>
</evidence>
<evidence type="ECO:0000305" key="4"/>
<sequence length="1103" mass="121136">MSQSKDKKKFVGGGGGGGGNNSGGGGYGSPKHNNNNNNRNSSNNKSPHQSHHNQQHHQQQQQQQQQQQQQQQQPFDSLTAMKERTVFMSMSLVGQNVSVTLKNGDVYEGILHTTSTSTGSSGGGWGVALKMARKKDTNNRVITTLPLPLVIIEAKDFLQITATGVVLDHYRDSFMNRDQQSFITDTELSGFDGNLKERELTPWTPDPSVGESLDDFAANSEAKKPANWDQFETNEKLFGVRTTYEEEIYTTRLDRDSEFYKINQSVAEKKAQEIENEKSGNIHLLEERGFVEGADYDEEERYSSVVRKGLLPTSTTSTTTSPPTQNPTPSSSVYIPPSKRNNNNNTPSTPSVTSPPIVDKKHQQTHQDKKQTQQQQQQQQQQQQQQQQQQQQQQQQQQQQQTQPTTTATATASTSTSTTTTTNESPSSSSTSSTPSTPSTPKNITTTTATTSTNNTPTATNTNVNSPLGDRESPTISKLRLHQSTIDQDVMGSPRENLSPRSVAYTRYRQILSEPTNKSMNKSGSNISTTPVNGSGNVGPNGTPLLSSVHSDQAPKSPVPTIVSNHGLVKALSLELATPTVPEKFVNDFNNFKLKINNVDRGSETQGLKSFSSNLVIKSKSRPGSPLIGSGSPRPTPTQLSLSGSSTSTNTSTTSPPTTNTTTTTTTATNSTTPSTTEDDKSTTTPITTTILTENKSDDKEKEKEKEKEKVDEKEKEKEKEKSDEKDKDQSSTLVEKKDESSSSSNTTTTTTNTTNNNNNNTTTVTKLSKLKLNPNAKEFVPVVVNKPQPSFKSTTESNTDSVTPINEIYYDSMRKRQLQPESPDQVSLYWVDPFYPRYEEDPYAAAYQMRAHHHMVGHQPPPQLQFNPQFYSQQGHPQLQPHHHMVPPQLQQVPPGVNVHTMKPPGSLQPGGGGVVQPQGIVQPQGIVQPQGGVVQPSAGGAPKTMYQQQQQQQQQTGQPGGPMGVQRGGHLPPQQQPQQQQQQPPPQFIQGIPPGANLVISNGPPNQPFVFQGAHPPYAVPHPQYPMPPQGIQGGNKRFYQPPPQGYPQVQPMIIPQQGQVVSQNSPQQDSPSNRLNQQVPPYSYMTHPPRGYHPNENQYH</sequence>
<reference key="1">
    <citation type="journal article" date="2005" name="Nature">
        <title>The genome of the social amoeba Dictyostelium discoideum.</title>
        <authorList>
            <person name="Eichinger L."/>
            <person name="Pachebat J.A."/>
            <person name="Gloeckner G."/>
            <person name="Rajandream M.A."/>
            <person name="Sucgang R."/>
            <person name="Berriman M."/>
            <person name="Song J."/>
            <person name="Olsen R."/>
            <person name="Szafranski K."/>
            <person name="Xu Q."/>
            <person name="Tunggal B."/>
            <person name="Kummerfeld S."/>
            <person name="Madera M."/>
            <person name="Konfortov B.A."/>
            <person name="Rivero F."/>
            <person name="Bankier A.T."/>
            <person name="Lehmann R."/>
            <person name="Hamlin N."/>
            <person name="Davies R."/>
            <person name="Gaudet P."/>
            <person name="Fey P."/>
            <person name="Pilcher K."/>
            <person name="Chen G."/>
            <person name="Saunders D."/>
            <person name="Sodergren E.J."/>
            <person name="Davis P."/>
            <person name="Kerhornou A."/>
            <person name="Nie X."/>
            <person name="Hall N."/>
            <person name="Anjard C."/>
            <person name="Hemphill L."/>
            <person name="Bason N."/>
            <person name="Farbrother P."/>
            <person name="Desany B."/>
            <person name="Just E."/>
            <person name="Morio T."/>
            <person name="Rost R."/>
            <person name="Churcher C.M."/>
            <person name="Cooper J."/>
            <person name="Haydock S."/>
            <person name="van Driessche N."/>
            <person name="Cronin A."/>
            <person name="Goodhead I."/>
            <person name="Muzny D.M."/>
            <person name="Mourier T."/>
            <person name="Pain A."/>
            <person name="Lu M."/>
            <person name="Harper D."/>
            <person name="Lindsay R."/>
            <person name="Hauser H."/>
            <person name="James K.D."/>
            <person name="Quiles M."/>
            <person name="Madan Babu M."/>
            <person name="Saito T."/>
            <person name="Buchrieser C."/>
            <person name="Wardroper A."/>
            <person name="Felder M."/>
            <person name="Thangavelu M."/>
            <person name="Johnson D."/>
            <person name="Knights A."/>
            <person name="Loulseged H."/>
            <person name="Mungall K.L."/>
            <person name="Oliver K."/>
            <person name="Price C."/>
            <person name="Quail M.A."/>
            <person name="Urushihara H."/>
            <person name="Hernandez J."/>
            <person name="Rabbinowitsch E."/>
            <person name="Steffen D."/>
            <person name="Sanders M."/>
            <person name="Ma J."/>
            <person name="Kohara Y."/>
            <person name="Sharp S."/>
            <person name="Simmonds M.N."/>
            <person name="Spiegler S."/>
            <person name="Tivey A."/>
            <person name="Sugano S."/>
            <person name="White B."/>
            <person name="Walker D."/>
            <person name="Woodward J.R."/>
            <person name="Winckler T."/>
            <person name="Tanaka Y."/>
            <person name="Shaulsky G."/>
            <person name="Schleicher M."/>
            <person name="Weinstock G.M."/>
            <person name="Rosenthal A."/>
            <person name="Cox E.C."/>
            <person name="Chisholm R.L."/>
            <person name="Gibbs R.A."/>
            <person name="Loomis W.F."/>
            <person name="Platzer M."/>
            <person name="Kay R.R."/>
            <person name="Williams J.G."/>
            <person name="Dear P.H."/>
            <person name="Noegel A.A."/>
            <person name="Barrell B.G."/>
            <person name="Kuspa A."/>
        </authorList>
    </citation>
    <scope>NUCLEOTIDE SEQUENCE [LARGE SCALE GENOMIC DNA]</scope>
    <source>
        <strain>AX4</strain>
    </source>
</reference>